<name>NT5D3_MOUSE</name>
<sequence length="546" mass="63170">MATVAAAARGAGARAAAGLRSCGGAVARERPRSGCARRLCSAPAAPAAVDMKSYLWARYHEAKRSTDELVPSIMNNLLNPDAIFSNNEMSLSDIEIYGFDYDYTLVFYSKHLHTLIFNAARDLLINEHRYPVEIRKYEYDPSFAIRGLHYDVQRAVLMKIDAFHYIQMGTVYRGLSVVPDEEVIDMYEGSHVPLEQMSDFYGKSSHGNTMKQFMDIFSLPEMTLLSCVNEHFLKNNIDYEPVHLYKDVKDSIRDVHIKGIMYRAIEADIEKYICYADQTRAVLAKLAAHGKKMFLITNSPSSFVDKGMRYIVGKDWRDLFDVVIVQAEKPNFFNDKRRPFRKVNEKGVLLWDKIHKLQKGQIYKQGNLYEFLKLTGWRGSKVLYFGDHIYSDLADLTLKHGWRTGAIIPELRSELRIMNTEQYIQTMTWLQTLTGLLEQMQVHRDAESQLVLQEWKKERKEMREMTKSFFNAQFGSLFRTDQNPTYFLRRLSRFADIYMASLSCLLNYDVHHTFYPRRTPLQHELPAWSDSPSAFKAPLLQEAQAK</sequence>
<organism>
    <name type="scientific">Mus musculus</name>
    <name type="common">Mouse</name>
    <dbReference type="NCBI Taxonomy" id="10090"/>
    <lineage>
        <taxon>Eukaryota</taxon>
        <taxon>Metazoa</taxon>
        <taxon>Chordata</taxon>
        <taxon>Craniata</taxon>
        <taxon>Vertebrata</taxon>
        <taxon>Euteleostomi</taxon>
        <taxon>Mammalia</taxon>
        <taxon>Eutheria</taxon>
        <taxon>Euarchontoglires</taxon>
        <taxon>Glires</taxon>
        <taxon>Rodentia</taxon>
        <taxon>Myomorpha</taxon>
        <taxon>Muroidea</taxon>
        <taxon>Muridae</taxon>
        <taxon>Murinae</taxon>
        <taxon>Mus</taxon>
        <taxon>Mus</taxon>
    </lineage>
</organism>
<protein>
    <recommendedName>
        <fullName>5'-nucleotidase domain-containing protein 3</fullName>
        <ecNumber>3.1.3.-</ecNumber>
    </recommendedName>
    <alternativeName>
        <fullName>GRP94-neighboring nucleotidase</fullName>
    </alternativeName>
</protein>
<comment type="cofactor">
    <cofactor evidence="1">
        <name>Mg(2+)</name>
        <dbReference type="ChEBI" id="CHEBI:18420"/>
    </cofactor>
    <text evidence="1">Binds 1 Mg(2+) ion per subunit.</text>
</comment>
<comment type="similarity">
    <text evidence="3">Belongs to the 5'(3')-deoxyribonucleotidase family.</text>
</comment>
<accession>Q3UHB1</accession>
<accession>Q3T9W5</accession>
<dbReference type="EC" id="3.1.3.-"/>
<dbReference type="EMBL" id="AK147488">
    <property type="protein sequence ID" value="BAE27946.1"/>
    <property type="molecule type" value="mRNA"/>
</dbReference>
<dbReference type="EMBL" id="AK172248">
    <property type="protein sequence ID" value="BAE42905.1"/>
    <property type="molecule type" value="mRNA"/>
</dbReference>
<dbReference type="CCDS" id="CCDS36020.1"/>
<dbReference type="RefSeq" id="NP_780540.2">
    <property type="nucleotide sequence ID" value="NM_175331.3"/>
</dbReference>
<dbReference type="SMR" id="Q3UHB1"/>
<dbReference type="BioGRID" id="222087">
    <property type="interactions" value="8"/>
</dbReference>
<dbReference type="FunCoup" id="Q3UHB1">
    <property type="interactions" value="1296"/>
</dbReference>
<dbReference type="IntAct" id="Q3UHB1">
    <property type="interactions" value="1"/>
</dbReference>
<dbReference type="MINT" id="Q3UHB1"/>
<dbReference type="STRING" id="10090.ENSMUSP00000096994"/>
<dbReference type="iPTMnet" id="Q3UHB1"/>
<dbReference type="MetOSite" id="Q3UHB1"/>
<dbReference type="PhosphoSitePlus" id="Q3UHB1"/>
<dbReference type="SwissPalm" id="Q3UHB1"/>
<dbReference type="jPOST" id="Q3UHB1"/>
<dbReference type="PaxDb" id="10090-ENSMUSP00000096994"/>
<dbReference type="PeptideAtlas" id="Q3UHB1"/>
<dbReference type="ProteomicsDB" id="253029"/>
<dbReference type="Pumba" id="Q3UHB1"/>
<dbReference type="DNASU" id="103466"/>
<dbReference type="Ensembl" id="ENSMUST00000099396.3">
    <property type="protein sequence ID" value="ENSMUSP00000096994.3"/>
    <property type="gene ID" value="ENSMUSG00000054027.9"/>
</dbReference>
<dbReference type="GeneID" id="103466"/>
<dbReference type="KEGG" id="mmu:103466"/>
<dbReference type="UCSC" id="uc007gqm.1">
    <property type="organism name" value="mouse"/>
</dbReference>
<dbReference type="AGR" id="MGI:3513266"/>
<dbReference type="CTD" id="51559"/>
<dbReference type="MGI" id="MGI:3513266">
    <property type="gene designation" value="Nt5dc3"/>
</dbReference>
<dbReference type="VEuPathDB" id="HostDB:ENSMUSG00000054027"/>
<dbReference type="eggNOG" id="KOG2470">
    <property type="taxonomic scope" value="Eukaryota"/>
</dbReference>
<dbReference type="GeneTree" id="ENSGT00940000158637"/>
<dbReference type="HOGENOM" id="CLU_017845_5_1_1"/>
<dbReference type="InParanoid" id="Q3UHB1"/>
<dbReference type="OMA" id="WEMYNET"/>
<dbReference type="OrthoDB" id="409330at2759"/>
<dbReference type="PhylomeDB" id="Q3UHB1"/>
<dbReference type="TreeFam" id="TF323990"/>
<dbReference type="BioGRID-ORCS" id="103466">
    <property type="hits" value="3 hits in 77 CRISPR screens"/>
</dbReference>
<dbReference type="CD-CODE" id="CE726F99">
    <property type="entry name" value="Postsynaptic density"/>
</dbReference>
<dbReference type="ChiTaRS" id="Nt5dc3">
    <property type="organism name" value="mouse"/>
</dbReference>
<dbReference type="PRO" id="PR:Q3UHB1"/>
<dbReference type="Proteomes" id="UP000000589">
    <property type="component" value="Chromosome 10"/>
</dbReference>
<dbReference type="RNAct" id="Q3UHB1">
    <property type="molecule type" value="protein"/>
</dbReference>
<dbReference type="Bgee" id="ENSMUSG00000054027">
    <property type="expression patterns" value="Expressed in medial dorsal nucleus of thalamus and 234 other cell types or tissues"/>
</dbReference>
<dbReference type="GO" id="GO:0005829">
    <property type="term" value="C:cytosol"/>
    <property type="evidence" value="ECO:0000314"/>
    <property type="project" value="MGI"/>
</dbReference>
<dbReference type="GO" id="GO:0005739">
    <property type="term" value="C:mitochondrion"/>
    <property type="evidence" value="ECO:0007005"/>
    <property type="project" value="MGI"/>
</dbReference>
<dbReference type="GO" id="GO:0043235">
    <property type="term" value="C:receptor complex"/>
    <property type="evidence" value="ECO:0000266"/>
    <property type="project" value="MGI"/>
</dbReference>
<dbReference type="GO" id="GO:0016787">
    <property type="term" value="F:hydrolase activity"/>
    <property type="evidence" value="ECO:0007669"/>
    <property type="project" value="UniProtKB-KW"/>
</dbReference>
<dbReference type="GO" id="GO:0046872">
    <property type="term" value="F:metal ion binding"/>
    <property type="evidence" value="ECO:0007669"/>
    <property type="project" value="UniProtKB-KW"/>
</dbReference>
<dbReference type="CDD" id="cd07522">
    <property type="entry name" value="HAD_cN-II"/>
    <property type="match status" value="1"/>
</dbReference>
<dbReference type="FunFam" id="3.40.50.1000:FF:000026">
    <property type="entry name" value="NT5DC3 isoform 1"/>
    <property type="match status" value="1"/>
</dbReference>
<dbReference type="Gene3D" id="3.40.50.1000">
    <property type="entry name" value="HAD superfamily/HAD-like"/>
    <property type="match status" value="1"/>
</dbReference>
<dbReference type="InterPro" id="IPR036412">
    <property type="entry name" value="HAD-like_sf"/>
</dbReference>
<dbReference type="InterPro" id="IPR008380">
    <property type="entry name" value="HAD-SF_hydro_IG_5-nucl"/>
</dbReference>
<dbReference type="InterPro" id="IPR023214">
    <property type="entry name" value="HAD_sf"/>
</dbReference>
<dbReference type="InterPro" id="IPR016695">
    <property type="entry name" value="Pur_nucleotidase"/>
</dbReference>
<dbReference type="NCBIfam" id="TIGR02244">
    <property type="entry name" value="HAD-IG-Ncltidse"/>
    <property type="match status" value="1"/>
</dbReference>
<dbReference type="PANTHER" id="PTHR12103">
    <property type="entry name" value="5'-NUCLEOTIDASE DOMAIN-CONTAINING"/>
    <property type="match status" value="1"/>
</dbReference>
<dbReference type="PANTHER" id="PTHR12103:SF11">
    <property type="entry name" value="5'-NUCLEOTIDASE DOMAIN-CONTAINING PROTEIN 3"/>
    <property type="match status" value="1"/>
</dbReference>
<dbReference type="Pfam" id="PF05761">
    <property type="entry name" value="5_nucleotid"/>
    <property type="match status" value="1"/>
</dbReference>
<dbReference type="PIRSF" id="PIRSF017434">
    <property type="entry name" value="Purine_5'-nucleotidase"/>
    <property type="match status" value="1"/>
</dbReference>
<dbReference type="SUPFAM" id="SSF56784">
    <property type="entry name" value="HAD-like"/>
    <property type="match status" value="1"/>
</dbReference>
<feature type="chain" id="PRO_0000326248" description="5'-nucleotidase domain-containing protein 3">
    <location>
        <begin position="1"/>
        <end position="546"/>
    </location>
</feature>
<feature type="active site" description="Nucleophile" evidence="1">
    <location>
        <position position="100"/>
    </location>
</feature>
<feature type="active site" description="Proton donor" evidence="1">
    <location>
        <position position="102"/>
    </location>
</feature>
<feature type="binding site" evidence="1">
    <location>
        <position position="100"/>
    </location>
    <ligand>
        <name>Mg(2+)</name>
        <dbReference type="ChEBI" id="CHEBI:18420"/>
    </ligand>
</feature>
<feature type="binding site" evidence="1">
    <location>
        <position position="102"/>
    </location>
    <ligand>
        <name>Mg(2+)</name>
        <dbReference type="ChEBI" id="CHEBI:18420"/>
    </ligand>
</feature>
<feature type="binding site" evidence="2">
    <location>
        <begin position="249"/>
        <end position="257"/>
    </location>
    <ligand>
        <name>substrate</name>
    </ligand>
</feature>
<feature type="binding site" evidence="1">
    <location>
        <position position="387"/>
    </location>
    <ligand>
        <name>Mg(2+)</name>
        <dbReference type="ChEBI" id="CHEBI:18420"/>
    </ligand>
</feature>
<feature type="sequence conflict" description="In Ref. 1; BAE42905." evidence="3" ref="1">
    <original>N</original>
    <variation>D</variation>
    <location>
        <position position="75"/>
    </location>
</feature>
<feature type="sequence conflict" description="In Ref. 1; BAE42905." evidence="3" ref="1">
    <original>L</original>
    <variation>W</variation>
    <location>
        <position position="157"/>
    </location>
</feature>
<evidence type="ECO:0000250" key="1"/>
<evidence type="ECO:0000255" key="2"/>
<evidence type="ECO:0000305" key="3"/>
<reference key="1">
    <citation type="journal article" date="2005" name="Science">
        <title>The transcriptional landscape of the mammalian genome.</title>
        <authorList>
            <person name="Carninci P."/>
            <person name="Kasukawa T."/>
            <person name="Katayama S."/>
            <person name="Gough J."/>
            <person name="Frith M.C."/>
            <person name="Maeda N."/>
            <person name="Oyama R."/>
            <person name="Ravasi T."/>
            <person name="Lenhard B."/>
            <person name="Wells C."/>
            <person name="Kodzius R."/>
            <person name="Shimokawa K."/>
            <person name="Bajic V.B."/>
            <person name="Brenner S.E."/>
            <person name="Batalov S."/>
            <person name="Forrest A.R."/>
            <person name="Zavolan M."/>
            <person name="Davis M.J."/>
            <person name="Wilming L.G."/>
            <person name="Aidinis V."/>
            <person name="Allen J.E."/>
            <person name="Ambesi-Impiombato A."/>
            <person name="Apweiler R."/>
            <person name="Aturaliya R.N."/>
            <person name="Bailey T.L."/>
            <person name="Bansal M."/>
            <person name="Baxter L."/>
            <person name="Beisel K.W."/>
            <person name="Bersano T."/>
            <person name="Bono H."/>
            <person name="Chalk A.M."/>
            <person name="Chiu K.P."/>
            <person name="Choudhary V."/>
            <person name="Christoffels A."/>
            <person name="Clutterbuck D.R."/>
            <person name="Crowe M.L."/>
            <person name="Dalla E."/>
            <person name="Dalrymple B.P."/>
            <person name="de Bono B."/>
            <person name="Della Gatta G."/>
            <person name="di Bernardo D."/>
            <person name="Down T."/>
            <person name="Engstrom P."/>
            <person name="Fagiolini M."/>
            <person name="Faulkner G."/>
            <person name="Fletcher C.F."/>
            <person name="Fukushima T."/>
            <person name="Furuno M."/>
            <person name="Futaki S."/>
            <person name="Gariboldi M."/>
            <person name="Georgii-Hemming P."/>
            <person name="Gingeras T.R."/>
            <person name="Gojobori T."/>
            <person name="Green R.E."/>
            <person name="Gustincich S."/>
            <person name="Harbers M."/>
            <person name="Hayashi Y."/>
            <person name="Hensch T.K."/>
            <person name="Hirokawa N."/>
            <person name="Hill D."/>
            <person name="Huminiecki L."/>
            <person name="Iacono M."/>
            <person name="Ikeo K."/>
            <person name="Iwama A."/>
            <person name="Ishikawa T."/>
            <person name="Jakt M."/>
            <person name="Kanapin A."/>
            <person name="Katoh M."/>
            <person name="Kawasawa Y."/>
            <person name="Kelso J."/>
            <person name="Kitamura H."/>
            <person name="Kitano H."/>
            <person name="Kollias G."/>
            <person name="Krishnan S.P."/>
            <person name="Kruger A."/>
            <person name="Kummerfeld S.K."/>
            <person name="Kurochkin I.V."/>
            <person name="Lareau L.F."/>
            <person name="Lazarevic D."/>
            <person name="Lipovich L."/>
            <person name="Liu J."/>
            <person name="Liuni S."/>
            <person name="McWilliam S."/>
            <person name="Madan Babu M."/>
            <person name="Madera M."/>
            <person name="Marchionni L."/>
            <person name="Matsuda H."/>
            <person name="Matsuzawa S."/>
            <person name="Miki H."/>
            <person name="Mignone F."/>
            <person name="Miyake S."/>
            <person name="Morris K."/>
            <person name="Mottagui-Tabar S."/>
            <person name="Mulder N."/>
            <person name="Nakano N."/>
            <person name="Nakauchi H."/>
            <person name="Ng P."/>
            <person name="Nilsson R."/>
            <person name="Nishiguchi S."/>
            <person name="Nishikawa S."/>
            <person name="Nori F."/>
            <person name="Ohara O."/>
            <person name="Okazaki Y."/>
            <person name="Orlando V."/>
            <person name="Pang K.C."/>
            <person name="Pavan W.J."/>
            <person name="Pavesi G."/>
            <person name="Pesole G."/>
            <person name="Petrovsky N."/>
            <person name="Piazza S."/>
            <person name="Reed J."/>
            <person name="Reid J.F."/>
            <person name="Ring B.Z."/>
            <person name="Ringwald M."/>
            <person name="Rost B."/>
            <person name="Ruan Y."/>
            <person name="Salzberg S.L."/>
            <person name="Sandelin A."/>
            <person name="Schneider C."/>
            <person name="Schoenbach C."/>
            <person name="Sekiguchi K."/>
            <person name="Semple C.A."/>
            <person name="Seno S."/>
            <person name="Sessa L."/>
            <person name="Sheng Y."/>
            <person name="Shibata Y."/>
            <person name="Shimada H."/>
            <person name="Shimada K."/>
            <person name="Silva D."/>
            <person name="Sinclair B."/>
            <person name="Sperling S."/>
            <person name="Stupka E."/>
            <person name="Sugiura K."/>
            <person name="Sultana R."/>
            <person name="Takenaka Y."/>
            <person name="Taki K."/>
            <person name="Tammoja K."/>
            <person name="Tan S.L."/>
            <person name="Tang S."/>
            <person name="Taylor M.S."/>
            <person name="Tegner J."/>
            <person name="Teichmann S.A."/>
            <person name="Ueda H.R."/>
            <person name="van Nimwegen E."/>
            <person name="Verardo R."/>
            <person name="Wei C.L."/>
            <person name="Yagi K."/>
            <person name="Yamanishi H."/>
            <person name="Zabarovsky E."/>
            <person name="Zhu S."/>
            <person name="Zimmer A."/>
            <person name="Hide W."/>
            <person name="Bult C."/>
            <person name="Grimmond S.M."/>
            <person name="Teasdale R.D."/>
            <person name="Liu E.T."/>
            <person name="Brusic V."/>
            <person name="Quackenbush J."/>
            <person name="Wahlestedt C."/>
            <person name="Mattick J.S."/>
            <person name="Hume D.A."/>
            <person name="Kai C."/>
            <person name="Sasaki D."/>
            <person name="Tomaru Y."/>
            <person name="Fukuda S."/>
            <person name="Kanamori-Katayama M."/>
            <person name="Suzuki M."/>
            <person name="Aoki J."/>
            <person name="Arakawa T."/>
            <person name="Iida J."/>
            <person name="Imamura K."/>
            <person name="Itoh M."/>
            <person name="Kato T."/>
            <person name="Kawaji H."/>
            <person name="Kawagashira N."/>
            <person name="Kawashima T."/>
            <person name="Kojima M."/>
            <person name="Kondo S."/>
            <person name="Konno H."/>
            <person name="Nakano K."/>
            <person name="Ninomiya N."/>
            <person name="Nishio T."/>
            <person name="Okada M."/>
            <person name="Plessy C."/>
            <person name="Shibata K."/>
            <person name="Shiraki T."/>
            <person name="Suzuki S."/>
            <person name="Tagami M."/>
            <person name="Waki K."/>
            <person name="Watahiki A."/>
            <person name="Okamura-Oho Y."/>
            <person name="Suzuki H."/>
            <person name="Kawai J."/>
            <person name="Hayashizaki Y."/>
        </authorList>
    </citation>
    <scope>NUCLEOTIDE SEQUENCE [LARGE SCALE MRNA]</scope>
    <source>
        <strain>NOD</strain>
        <tissue>Spleen</tissue>
    </source>
</reference>
<reference key="2">
    <citation type="journal article" date="2010" name="Cell">
        <title>A tissue-specific atlas of mouse protein phosphorylation and expression.</title>
        <authorList>
            <person name="Huttlin E.L."/>
            <person name="Jedrychowski M.P."/>
            <person name="Elias J.E."/>
            <person name="Goswami T."/>
            <person name="Rad R."/>
            <person name="Beausoleil S.A."/>
            <person name="Villen J."/>
            <person name="Haas W."/>
            <person name="Sowa M.E."/>
            <person name="Gygi S.P."/>
        </authorList>
    </citation>
    <scope>IDENTIFICATION BY MASS SPECTROMETRY [LARGE SCALE ANALYSIS]</scope>
    <source>
        <tissue>Brain</tissue>
        <tissue>Heart</tissue>
        <tissue>Testis</tissue>
    </source>
</reference>
<proteinExistence type="evidence at protein level"/>
<keyword id="KW-0378">Hydrolase</keyword>
<keyword id="KW-0460">Magnesium</keyword>
<keyword id="KW-0479">Metal-binding</keyword>
<keyword id="KW-1185">Reference proteome</keyword>
<gene>
    <name type="primary">Nt5dc3</name>
    <name type="synonym">Gnn</name>
</gene>